<protein>
    <recommendedName>
        <fullName evidence="1">Small ribosomal subunit protein uS15</fullName>
    </recommendedName>
    <alternativeName>
        <fullName evidence="2">30S ribosomal protein S15</fullName>
    </alternativeName>
</protein>
<keyword id="KW-1185">Reference proteome</keyword>
<keyword id="KW-0687">Ribonucleoprotein</keyword>
<keyword id="KW-0689">Ribosomal protein</keyword>
<keyword id="KW-0694">RNA-binding</keyword>
<keyword id="KW-0699">rRNA-binding</keyword>
<accession>Q5FQM0</accession>
<gene>
    <name evidence="1" type="primary">rpsO</name>
    <name type="ordered locus">GOX1585</name>
</gene>
<dbReference type="EMBL" id="CP000009">
    <property type="protein sequence ID" value="AAW61326.1"/>
    <property type="molecule type" value="Genomic_DNA"/>
</dbReference>
<dbReference type="RefSeq" id="WP_011253110.1">
    <property type="nucleotide sequence ID" value="NZ_LT900338.1"/>
</dbReference>
<dbReference type="SMR" id="Q5FQM0"/>
<dbReference type="STRING" id="290633.GOX1585"/>
<dbReference type="GeneID" id="76194228"/>
<dbReference type="KEGG" id="gox:GOX1585"/>
<dbReference type="eggNOG" id="COG0184">
    <property type="taxonomic scope" value="Bacteria"/>
</dbReference>
<dbReference type="HOGENOM" id="CLU_148518_0_0_5"/>
<dbReference type="Proteomes" id="UP000006375">
    <property type="component" value="Chromosome"/>
</dbReference>
<dbReference type="GO" id="GO:0022627">
    <property type="term" value="C:cytosolic small ribosomal subunit"/>
    <property type="evidence" value="ECO:0007669"/>
    <property type="project" value="TreeGrafter"/>
</dbReference>
<dbReference type="GO" id="GO:0019843">
    <property type="term" value="F:rRNA binding"/>
    <property type="evidence" value="ECO:0007669"/>
    <property type="project" value="UniProtKB-UniRule"/>
</dbReference>
<dbReference type="GO" id="GO:0003735">
    <property type="term" value="F:structural constituent of ribosome"/>
    <property type="evidence" value="ECO:0007669"/>
    <property type="project" value="InterPro"/>
</dbReference>
<dbReference type="GO" id="GO:0006412">
    <property type="term" value="P:translation"/>
    <property type="evidence" value="ECO:0007669"/>
    <property type="project" value="UniProtKB-UniRule"/>
</dbReference>
<dbReference type="CDD" id="cd00353">
    <property type="entry name" value="Ribosomal_S15p_S13e"/>
    <property type="match status" value="1"/>
</dbReference>
<dbReference type="FunFam" id="1.10.287.10:FF:000002">
    <property type="entry name" value="30S ribosomal protein S15"/>
    <property type="match status" value="1"/>
</dbReference>
<dbReference type="Gene3D" id="6.10.250.3130">
    <property type="match status" value="1"/>
</dbReference>
<dbReference type="Gene3D" id="1.10.287.10">
    <property type="entry name" value="S15/NS1, RNA-binding"/>
    <property type="match status" value="1"/>
</dbReference>
<dbReference type="HAMAP" id="MF_01343_B">
    <property type="entry name" value="Ribosomal_uS15_B"/>
    <property type="match status" value="1"/>
</dbReference>
<dbReference type="InterPro" id="IPR000589">
    <property type="entry name" value="Ribosomal_uS15"/>
</dbReference>
<dbReference type="InterPro" id="IPR005290">
    <property type="entry name" value="Ribosomal_uS15_bac-type"/>
</dbReference>
<dbReference type="InterPro" id="IPR009068">
    <property type="entry name" value="uS15_NS1_RNA-bd_sf"/>
</dbReference>
<dbReference type="NCBIfam" id="TIGR00952">
    <property type="entry name" value="S15_bact"/>
    <property type="match status" value="1"/>
</dbReference>
<dbReference type="PANTHER" id="PTHR23321">
    <property type="entry name" value="RIBOSOMAL PROTEIN S15, BACTERIAL AND ORGANELLAR"/>
    <property type="match status" value="1"/>
</dbReference>
<dbReference type="PANTHER" id="PTHR23321:SF26">
    <property type="entry name" value="SMALL RIBOSOMAL SUBUNIT PROTEIN US15M"/>
    <property type="match status" value="1"/>
</dbReference>
<dbReference type="Pfam" id="PF00312">
    <property type="entry name" value="Ribosomal_S15"/>
    <property type="match status" value="1"/>
</dbReference>
<dbReference type="SMART" id="SM01387">
    <property type="entry name" value="Ribosomal_S15"/>
    <property type="match status" value="1"/>
</dbReference>
<dbReference type="SUPFAM" id="SSF47060">
    <property type="entry name" value="S15/NS1 RNA-binding domain"/>
    <property type="match status" value="1"/>
</dbReference>
<dbReference type="PROSITE" id="PS00362">
    <property type="entry name" value="RIBOSOMAL_S15"/>
    <property type="match status" value="1"/>
</dbReference>
<organism>
    <name type="scientific">Gluconobacter oxydans (strain 621H)</name>
    <name type="common">Gluconobacter suboxydans</name>
    <dbReference type="NCBI Taxonomy" id="290633"/>
    <lineage>
        <taxon>Bacteria</taxon>
        <taxon>Pseudomonadati</taxon>
        <taxon>Pseudomonadota</taxon>
        <taxon>Alphaproteobacteria</taxon>
        <taxon>Acetobacterales</taxon>
        <taxon>Acetobacteraceae</taxon>
        <taxon>Gluconobacter</taxon>
    </lineage>
</organism>
<name>RS15_GLUOX</name>
<feature type="chain" id="PRO_0000115445" description="Small ribosomal subunit protein uS15">
    <location>
        <begin position="1"/>
        <end position="89"/>
    </location>
</feature>
<sequence>MSITAERRTALISEYKQSETDTGSPEVQVAILSERIVNLTEHLKTHKKDFHSRRGLLMMVGQRRSLLDYLKRKDQARYQSLIERLGLRR</sequence>
<evidence type="ECO:0000255" key="1">
    <source>
        <dbReference type="HAMAP-Rule" id="MF_01343"/>
    </source>
</evidence>
<evidence type="ECO:0000305" key="2"/>
<reference key="1">
    <citation type="journal article" date="2005" name="Nat. Biotechnol.">
        <title>Complete genome sequence of the acetic acid bacterium Gluconobacter oxydans.</title>
        <authorList>
            <person name="Prust C."/>
            <person name="Hoffmeister M."/>
            <person name="Liesegang H."/>
            <person name="Wiezer A."/>
            <person name="Fricke W.F."/>
            <person name="Ehrenreich A."/>
            <person name="Gottschalk G."/>
            <person name="Deppenmeier U."/>
        </authorList>
    </citation>
    <scope>NUCLEOTIDE SEQUENCE [LARGE SCALE GENOMIC DNA]</scope>
    <source>
        <strain>621H</strain>
    </source>
</reference>
<proteinExistence type="inferred from homology"/>
<comment type="function">
    <text evidence="1">One of the primary rRNA binding proteins, it binds directly to 16S rRNA where it helps nucleate assembly of the platform of the 30S subunit by binding and bridging several RNA helices of the 16S rRNA.</text>
</comment>
<comment type="function">
    <text evidence="1">Forms an intersubunit bridge (bridge B4) with the 23S rRNA of the 50S subunit in the ribosome.</text>
</comment>
<comment type="subunit">
    <text evidence="1">Part of the 30S ribosomal subunit. Forms a bridge to the 50S subunit in the 70S ribosome, contacting the 23S rRNA.</text>
</comment>
<comment type="similarity">
    <text evidence="1">Belongs to the universal ribosomal protein uS15 family.</text>
</comment>